<name>ANM7_DROPS</name>
<accession>B5DZN7</accession>
<feature type="chain" id="PRO_0000373917" description="Protein arginine N-methyltransferase 7">
    <location>
        <begin position="1"/>
        <end position="692"/>
    </location>
</feature>
<feature type="domain" description="SAM-dependent MTase PRMT-type 1" evidence="2">
    <location>
        <begin position="14"/>
        <end position="359"/>
    </location>
</feature>
<feature type="domain" description="SAM-dependent MTase PRMT-type 2" evidence="2">
    <location>
        <begin position="368"/>
        <end position="692"/>
    </location>
</feature>
<reference key="1">
    <citation type="journal article" date="2005" name="Genome Res.">
        <title>Comparative genome sequencing of Drosophila pseudoobscura: chromosomal, gene, and cis-element evolution.</title>
        <authorList>
            <person name="Richards S."/>
            <person name="Liu Y."/>
            <person name="Bettencourt B.R."/>
            <person name="Hradecky P."/>
            <person name="Letovsky S."/>
            <person name="Nielsen R."/>
            <person name="Thornton K."/>
            <person name="Hubisz M.J."/>
            <person name="Chen R."/>
            <person name="Meisel R.P."/>
            <person name="Couronne O."/>
            <person name="Hua S."/>
            <person name="Smith M.A."/>
            <person name="Zhang P."/>
            <person name="Liu J."/>
            <person name="Bussemaker H.J."/>
            <person name="van Batenburg M.F."/>
            <person name="Howells S.L."/>
            <person name="Scherer S.E."/>
            <person name="Sodergren E."/>
            <person name="Matthews B.B."/>
            <person name="Crosby M.A."/>
            <person name="Schroeder A.J."/>
            <person name="Ortiz-Barrientos D."/>
            <person name="Rives C.M."/>
            <person name="Metzker M.L."/>
            <person name="Muzny D.M."/>
            <person name="Scott G."/>
            <person name="Steffen D."/>
            <person name="Wheeler D.A."/>
            <person name="Worley K.C."/>
            <person name="Havlak P."/>
            <person name="Durbin K.J."/>
            <person name="Egan A."/>
            <person name="Gill R."/>
            <person name="Hume J."/>
            <person name="Morgan M.B."/>
            <person name="Miner G."/>
            <person name="Hamilton C."/>
            <person name="Huang Y."/>
            <person name="Waldron L."/>
            <person name="Verduzco D."/>
            <person name="Clerc-Blankenburg K.P."/>
            <person name="Dubchak I."/>
            <person name="Noor M.A.F."/>
            <person name="Anderson W."/>
            <person name="White K.P."/>
            <person name="Clark A.G."/>
            <person name="Schaeffer S.W."/>
            <person name="Gelbart W.M."/>
            <person name="Weinstock G.M."/>
            <person name="Gibbs R.A."/>
        </authorList>
    </citation>
    <scope>NUCLEOTIDE SEQUENCE [LARGE SCALE GENOMIC DNA]</scope>
    <source>
        <strain>MV2-25 / Tucson 14011-0121.94</strain>
    </source>
</reference>
<organism>
    <name type="scientific">Drosophila pseudoobscura pseudoobscura</name>
    <name type="common">Fruit fly</name>
    <dbReference type="NCBI Taxonomy" id="46245"/>
    <lineage>
        <taxon>Eukaryota</taxon>
        <taxon>Metazoa</taxon>
        <taxon>Ecdysozoa</taxon>
        <taxon>Arthropoda</taxon>
        <taxon>Hexapoda</taxon>
        <taxon>Insecta</taxon>
        <taxon>Pterygota</taxon>
        <taxon>Neoptera</taxon>
        <taxon>Endopterygota</taxon>
        <taxon>Diptera</taxon>
        <taxon>Brachycera</taxon>
        <taxon>Muscomorpha</taxon>
        <taxon>Ephydroidea</taxon>
        <taxon>Drosophilidae</taxon>
        <taxon>Drosophila</taxon>
        <taxon>Sophophora</taxon>
    </lineage>
</organism>
<evidence type="ECO:0000250" key="1"/>
<evidence type="ECO:0000255" key="2">
    <source>
        <dbReference type="PROSITE-ProRule" id="PRU01015"/>
    </source>
</evidence>
<keyword id="KW-0489">Methyltransferase</keyword>
<keyword id="KW-1185">Reference proteome</keyword>
<keyword id="KW-0677">Repeat</keyword>
<keyword id="KW-0949">S-adenosyl-L-methionine</keyword>
<keyword id="KW-0808">Transferase</keyword>
<dbReference type="EC" id="2.1.1.-"/>
<dbReference type="EMBL" id="CM000071">
    <property type="protein sequence ID" value="EDY68835.1"/>
    <property type="molecule type" value="Genomic_DNA"/>
</dbReference>
<dbReference type="SMR" id="B5DZN7"/>
<dbReference type="FunCoup" id="B5DZN7">
    <property type="interactions" value="2152"/>
</dbReference>
<dbReference type="STRING" id="46245.B5DZN7"/>
<dbReference type="eggNOG" id="KOG1501">
    <property type="taxonomic scope" value="Eukaryota"/>
</dbReference>
<dbReference type="HOGENOM" id="CLU_015180_0_0_1"/>
<dbReference type="InParanoid" id="B5DZN7"/>
<dbReference type="OMA" id="CHHDEYS"/>
<dbReference type="Proteomes" id="UP000001819">
    <property type="component" value="Unplaced"/>
</dbReference>
<dbReference type="GO" id="GO:0042054">
    <property type="term" value="F:histone methyltransferase activity"/>
    <property type="evidence" value="ECO:0007669"/>
    <property type="project" value="TreeGrafter"/>
</dbReference>
<dbReference type="GO" id="GO:0035243">
    <property type="term" value="F:protein-arginine omega-N symmetric methyltransferase activity"/>
    <property type="evidence" value="ECO:0000250"/>
    <property type="project" value="UniProtKB"/>
</dbReference>
<dbReference type="GO" id="GO:0018216">
    <property type="term" value="P:peptidyl-arginine methylation"/>
    <property type="evidence" value="ECO:0000250"/>
    <property type="project" value="UniProtKB"/>
</dbReference>
<dbReference type="CDD" id="cd02440">
    <property type="entry name" value="AdoMet_MTases"/>
    <property type="match status" value="1"/>
</dbReference>
<dbReference type="FunFam" id="2.70.160.11:FF:000014">
    <property type="entry name" value="Protein arginine N-methyltransferase 7"/>
    <property type="match status" value="1"/>
</dbReference>
<dbReference type="FunFam" id="2.70.160.11:FF:000019">
    <property type="entry name" value="Protein arginine N-methyltransferase 7"/>
    <property type="match status" value="1"/>
</dbReference>
<dbReference type="FunFam" id="3.40.50.150:FF:000070">
    <property type="entry name" value="Protein arginine N-methyltransferase 7"/>
    <property type="match status" value="1"/>
</dbReference>
<dbReference type="FunFam" id="3.40.50.150:FF:000071">
    <property type="entry name" value="Protein arginine N-methyltransferase 7"/>
    <property type="match status" value="1"/>
</dbReference>
<dbReference type="Gene3D" id="2.70.160.11">
    <property type="entry name" value="Hnrnp arginine n-methyltransferase1"/>
    <property type="match status" value="2"/>
</dbReference>
<dbReference type="Gene3D" id="3.40.50.150">
    <property type="entry name" value="Vaccinia Virus protein VP39"/>
    <property type="match status" value="2"/>
</dbReference>
<dbReference type="InterPro" id="IPR025799">
    <property type="entry name" value="Arg_MeTrfase"/>
</dbReference>
<dbReference type="InterPro" id="IPR014644">
    <property type="entry name" value="MeTrfase_PRMT7"/>
</dbReference>
<dbReference type="InterPro" id="IPR055135">
    <property type="entry name" value="PRMT_dom"/>
</dbReference>
<dbReference type="InterPro" id="IPR029063">
    <property type="entry name" value="SAM-dependent_MTases_sf"/>
</dbReference>
<dbReference type="PANTHER" id="PTHR11006">
    <property type="entry name" value="PROTEIN ARGININE N-METHYLTRANSFERASE"/>
    <property type="match status" value="1"/>
</dbReference>
<dbReference type="PANTHER" id="PTHR11006:SF4">
    <property type="entry name" value="PROTEIN ARGININE N-METHYLTRANSFERASE 7"/>
    <property type="match status" value="1"/>
</dbReference>
<dbReference type="Pfam" id="PF06325">
    <property type="entry name" value="PrmA"/>
    <property type="match status" value="1"/>
</dbReference>
<dbReference type="Pfam" id="PF22528">
    <property type="entry name" value="PRMT_C"/>
    <property type="match status" value="2"/>
</dbReference>
<dbReference type="PIRSF" id="PIRSF036946">
    <property type="entry name" value="Arg_N-mtase"/>
    <property type="match status" value="1"/>
</dbReference>
<dbReference type="SUPFAM" id="SSF53335">
    <property type="entry name" value="S-adenosyl-L-methionine-dependent methyltransferases"/>
    <property type="match status" value="2"/>
</dbReference>
<dbReference type="PROSITE" id="PS51678">
    <property type="entry name" value="SAM_MT_PRMT"/>
    <property type="match status" value="2"/>
</dbReference>
<comment type="function">
    <text evidence="1">Essential arginine methyltransferase that can both catalyze the formation of omega-N monomethylarginine (MMA) and symmetrical dimethylarginine (sDMA). Specifically mediates the symmetrical dimethylation of arginine residues in the small nuclear ribonucleoproteins SmD1 and SmD3 (By similarity).</text>
</comment>
<comment type="similarity">
    <text evidence="2">Belongs to the class I-like SAM-binding methyltransferase superfamily. Protein arginine N-methyltransferase family. PRMT7 subfamily.</text>
</comment>
<gene>
    <name type="primary">Art7</name>
    <name type="ORF">GA24672</name>
</gene>
<protein>
    <recommendedName>
        <fullName>Protein arginine N-methyltransferase 7</fullName>
        <ecNumber>2.1.1.-</ecNumber>
    </recommendedName>
</protein>
<proteinExistence type="inferred from homology"/>
<sequence length="692" mass="78133">MSCFSHVMNPITGENSWQEREDDYDYHQEVANAGFGDMLHDWERNQKYFAALRKTIKGMRAAGREVHVLDIGTGTGILSMMALKAGADSVTACEAFLPMANCAAKIFTDNGVGDKVQLIRKRSTDIKIGADLDMPQRANLLVAELLDTELIGEGAISIYNHAHAELLTDDALCIPARARCYAQVAQSPLASQWNSLKILPNLDGEALLRPPEQLKSCKGEAALHDVQLSQLPAGTFRLLTEPIEIFQLDFQRKEKREKQREKLVQLQASQPGAAELVFYWWDIQLDDQGEILLSCAPYWAHPELKELSASKEERVPVANVVPWRDHWMQAIYYVPKPPQLATVGQDFYLSCHHDEYSLWFDAMLEAPAKTVRRHTCSCDLHMTYSRSRIGQLNQAIRNKRYLRYLEATIVPKQSNVLVLGNGCMLGLASAALGAASVQLHEPHRFSRRLIDSIVQHNELKNVKYVENVEQLEDTELIALSHVFAEPYFLNAILPWDNFYFGTLLMKLKDKLPEKVEISPCEARIFALPVEFLDLHKIRAPVGSCEGFDLRLFDEMVERSAEQAVSLVEAQPLWEYPSRALAEPQQLLSVDFANFNVDHHLQGSIELTQSGVCNGIALWVDWHLDKTNNPKSIVSTGPSEAVVPGEFVKWDMFVRQGVHFPRKPTDLSGRVAWSTDFKPLLGQLKFGFSQEKR</sequence>